<comment type="function">
    <text evidence="2">Large-conductance mechanosensitive channel that opens in response to stretch forces in the membrane lipid bilayer. Selective for cations. Rectifies with voltage.</text>
</comment>
<comment type="subcellular location">
    <subcellularLocation>
        <location evidence="2">Cell membrane</location>
        <topology evidence="2">Multi-pass membrane protein</topology>
    </subcellularLocation>
</comment>
<comment type="similarity">
    <text evidence="3">Belongs to the MscS (TC 1.A.23) family.</text>
</comment>
<organism>
    <name type="scientific">Methanocaldococcus jannaschii (strain ATCC 43067 / DSM 2661 / JAL-1 / JCM 10045 / NBRC 100440)</name>
    <name type="common">Methanococcus jannaschii</name>
    <dbReference type="NCBI Taxonomy" id="243232"/>
    <lineage>
        <taxon>Archaea</taxon>
        <taxon>Methanobacteriati</taxon>
        <taxon>Methanobacteriota</taxon>
        <taxon>Methanomada group</taxon>
        <taxon>Methanococci</taxon>
        <taxon>Methanococcales</taxon>
        <taxon>Methanocaldococcaceae</taxon>
        <taxon>Methanocaldococcus</taxon>
    </lineage>
</organism>
<keyword id="KW-1003">Cell membrane</keyword>
<keyword id="KW-0407">Ion channel</keyword>
<keyword id="KW-0406">Ion transport</keyword>
<keyword id="KW-0472">Membrane</keyword>
<keyword id="KW-1185">Reference proteome</keyword>
<keyword id="KW-0812">Transmembrane</keyword>
<keyword id="KW-1133">Transmembrane helix</keyword>
<keyword id="KW-0813">Transport</keyword>
<dbReference type="EMBL" id="L77117">
    <property type="protein sequence ID" value="AAB99143.1"/>
    <property type="molecule type" value="Genomic_DNA"/>
</dbReference>
<dbReference type="PIR" id="F64442">
    <property type="entry name" value="F64442"/>
</dbReference>
<dbReference type="RefSeq" id="WP_010870654.1">
    <property type="nucleotide sequence ID" value="NC_000909.1"/>
</dbReference>
<dbReference type="SMR" id="Q58543"/>
<dbReference type="FunCoup" id="Q58543">
    <property type="interactions" value="8"/>
</dbReference>
<dbReference type="STRING" id="243232.MJ_1143"/>
<dbReference type="TCDB" id="1.A.23.4.1">
    <property type="family name" value="the small conductance mechanosensitive ion channel (mscs) family"/>
</dbReference>
<dbReference type="PaxDb" id="243232-MJ_1143"/>
<dbReference type="EnsemblBacteria" id="AAB99143">
    <property type="protein sequence ID" value="AAB99143"/>
    <property type="gene ID" value="MJ_1143"/>
</dbReference>
<dbReference type="GeneID" id="1452039"/>
<dbReference type="KEGG" id="mja:MJ_1143"/>
<dbReference type="eggNOG" id="arCOG01568">
    <property type="taxonomic scope" value="Archaea"/>
</dbReference>
<dbReference type="HOGENOM" id="CLU_037945_0_1_2"/>
<dbReference type="InParanoid" id="Q58543"/>
<dbReference type="OrthoDB" id="121853at2157"/>
<dbReference type="PhylomeDB" id="Q58543"/>
<dbReference type="Proteomes" id="UP000000805">
    <property type="component" value="Chromosome"/>
</dbReference>
<dbReference type="GO" id="GO:0005886">
    <property type="term" value="C:plasma membrane"/>
    <property type="evidence" value="ECO:0007669"/>
    <property type="project" value="UniProtKB-SubCell"/>
</dbReference>
<dbReference type="GO" id="GO:0034220">
    <property type="term" value="P:monoatomic ion transmembrane transport"/>
    <property type="evidence" value="ECO:0007669"/>
    <property type="project" value="UniProtKB-KW"/>
</dbReference>
<dbReference type="Gene3D" id="1.10.287.1260">
    <property type="match status" value="1"/>
</dbReference>
<dbReference type="Gene3D" id="2.30.30.60">
    <property type="match status" value="1"/>
</dbReference>
<dbReference type="Gene3D" id="3.30.70.100">
    <property type="match status" value="1"/>
</dbReference>
<dbReference type="InterPro" id="IPR010920">
    <property type="entry name" value="LSM_dom_sf"/>
</dbReference>
<dbReference type="InterPro" id="IPR049142">
    <property type="entry name" value="MS_channel_1st"/>
</dbReference>
<dbReference type="InterPro" id="IPR049278">
    <property type="entry name" value="MS_channel_C"/>
</dbReference>
<dbReference type="InterPro" id="IPR023408">
    <property type="entry name" value="MscS_beta-dom_sf"/>
</dbReference>
<dbReference type="InterPro" id="IPR006685">
    <property type="entry name" value="MscS_channel_2nd"/>
</dbReference>
<dbReference type="InterPro" id="IPR011066">
    <property type="entry name" value="MscS_channel_C_sf"/>
</dbReference>
<dbReference type="InterPro" id="IPR006686">
    <property type="entry name" value="MscS_channel_CS"/>
</dbReference>
<dbReference type="InterPro" id="IPR011014">
    <property type="entry name" value="MscS_channel_TM-2"/>
</dbReference>
<dbReference type="PANTHER" id="PTHR30566:SF5">
    <property type="entry name" value="MECHANOSENSITIVE ION CHANNEL PROTEIN 1, MITOCHONDRIAL-RELATED"/>
    <property type="match status" value="1"/>
</dbReference>
<dbReference type="PANTHER" id="PTHR30566">
    <property type="entry name" value="YNAI-RELATED MECHANOSENSITIVE ION CHANNEL"/>
    <property type="match status" value="1"/>
</dbReference>
<dbReference type="Pfam" id="PF21088">
    <property type="entry name" value="MS_channel_1st"/>
    <property type="match status" value="1"/>
</dbReference>
<dbReference type="Pfam" id="PF00924">
    <property type="entry name" value="MS_channel_2nd"/>
    <property type="match status" value="1"/>
</dbReference>
<dbReference type="Pfam" id="PF21082">
    <property type="entry name" value="MS_channel_3rd"/>
    <property type="match status" value="1"/>
</dbReference>
<dbReference type="SUPFAM" id="SSF82689">
    <property type="entry name" value="Mechanosensitive channel protein MscS (YggB), C-terminal domain"/>
    <property type="match status" value="1"/>
</dbReference>
<dbReference type="SUPFAM" id="SSF82861">
    <property type="entry name" value="Mechanosensitive channel protein MscS (YggB), transmembrane region"/>
    <property type="match status" value="1"/>
</dbReference>
<dbReference type="SUPFAM" id="SSF50182">
    <property type="entry name" value="Sm-like ribonucleoproteins"/>
    <property type="match status" value="1"/>
</dbReference>
<dbReference type="PROSITE" id="PS01246">
    <property type="entry name" value="UPF0003"/>
    <property type="match status" value="1"/>
</dbReference>
<gene>
    <name type="ordered locus">MJ1143</name>
</gene>
<protein>
    <recommendedName>
        <fullName>Large-conductance mechanosensitive channel MscMJLR</fullName>
    </recommendedName>
</protein>
<name>MSMJL_METJA</name>
<feature type="chain" id="PRO_0000110254" description="Large-conductance mechanosensitive channel MscMJLR">
    <location>
        <begin position="1"/>
        <end position="361"/>
    </location>
</feature>
<feature type="transmembrane region" description="Helical" evidence="1">
    <location>
        <begin position="20"/>
        <end position="40"/>
    </location>
</feature>
<feature type="transmembrane region" description="Helical" evidence="1">
    <location>
        <begin position="65"/>
        <end position="85"/>
    </location>
</feature>
<feature type="transmembrane region" description="Helical" evidence="1">
    <location>
        <begin position="89"/>
        <end position="109"/>
    </location>
</feature>
<feature type="transmembrane region" description="Helical" evidence="1">
    <location>
        <begin position="137"/>
        <end position="157"/>
    </location>
</feature>
<feature type="transmembrane region" description="Helical" evidence="1">
    <location>
        <begin position="177"/>
        <end position="197"/>
    </location>
</feature>
<reference key="1">
    <citation type="journal article" date="1996" name="Science">
        <title>Complete genome sequence of the methanogenic archaeon, Methanococcus jannaschii.</title>
        <authorList>
            <person name="Bult C.J."/>
            <person name="White O."/>
            <person name="Olsen G.J."/>
            <person name="Zhou L."/>
            <person name="Fleischmann R.D."/>
            <person name="Sutton G.G."/>
            <person name="Blake J.A."/>
            <person name="FitzGerald L.M."/>
            <person name="Clayton R.A."/>
            <person name="Gocayne J.D."/>
            <person name="Kerlavage A.R."/>
            <person name="Dougherty B.A."/>
            <person name="Tomb J.-F."/>
            <person name="Adams M.D."/>
            <person name="Reich C.I."/>
            <person name="Overbeek R."/>
            <person name="Kirkness E.F."/>
            <person name="Weinstock K.G."/>
            <person name="Merrick J.M."/>
            <person name="Glodek A."/>
            <person name="Scott J.L."/>
            <person name="Geoghagen N.S.M."/>
            <person name="Weidman J.F."/>
            <person name="Fuhrmann J.L."/>
            <person name="Nguyen D."/>
            <person name="Utterback T.R."/>
            <person name="Kelley J.M."/>
            <person name="Peterson J.D."/>
            <person name="Sadow P.W."/>
            <person name="Hanna M.C."/>
            <person name="Cotton M.D."/>
            <person name="Roberts K.M."/>
            <person name="Hurst M.A."/>
            <person name="Kaine B.P."/>
            <person name="Borodovsky M."/>
            <person name="Klenk H.-P."/>
            <person name="Fraser C.M."/>
            <person name="Smith H.O."/>
            <person name="Woese C.R."/>
            <person name="Venter J.C."/>
        </authorList>
    </citation>
    <scope>NUCLEOTIDE SEQUENCE [LARGE SCALE GENOMIC DNA]</scope>
    <source>
        <strain>ATCC 43067 / DSM 2661 / JAL-1 / JCM 10045 / NBRC 100440</strain>
    </source>
</reference>
<reference key="2">
    <citation type="journal article" date="2001" name="EMBO J.">
        <title>Structural and functional differences between two homologous mechanosensitive channels of Methanococcus jannaschii.</title>
        <authorList>
            <person name="Kloda A."/>
            <person name="Martinac B."/>
        </authorList>
    </citation>
    <scope>FUNCTION AS A MECHANOSENSITIVE CHANNEL</scope>
    <scope>SUBCELLULAR LOCATION</scope>
</reference>
<evidence type="ECO:0000255" key="1"/>
<evidence type="ECO:0000269" key="2">
    <source>
    </source>
</evidence>
<evidence type="ECO:0000305" key="3"/>
<accession>Q58543</accession>
<proteinExistence type="evidence at protein level"/>
<sequence>MTITQMISEILMHNTVYNYILSLISIILFIVIGKYANALIERLADKLHKKSGIELDELLIRALSLPVAIAIILSGFYFGVNFLYLLPSLKTAVNEGILTAFILCVVVFFDRFLNELVERYLALTISKKTKKDVDDQIVVLTKKLVRLVVWVVGLLLILSNLGYDIKTLLAGLGIGGLAVALASQNLVSNLIAGLIILTDKPFKIGNWITFSGGSGIVEDIGIRSTKIRATDNSIIVVPNSKLIDEIIQNVPSKNKWKVSTTIGVTYNTPVEKIRKAEEIIKNILLEHPNVEDEPITVYFKEFGDWSLNIQVVYYIKNSRYNGYQKYISTINEVNLKIKEEFDRKGIEFAFPTYTLYLKRDD</sequence>